<keyword id="KW-0150">Chloroplast</keyword>
<keyword id="KW-0507">mRNA processing</keyword>
<keyword id="KW-0934">Plastid</keyword>
<keyword id="KW-0694">RNA-binding</keyword>
<keyword id="KW-0819">tRNA processing</keyword>
<accession>O98636</accession>
<geneLocation type="chloroplast"/>
<reference key="1">
    <citation type="journal article" date="1999" name="Syst. Bot.">
        <title>Phylogeny, classification and floral evolution of water lilies (Nymphaeaceae; Nymphaeales): a synthesis of non-molecular, rbcL, matK and 18S rDNA data.</title>
        <authorList>
            <person name="Les D.H."/>
            <person name="Schneider E.L."/>
            <person name="Padgett D.J."/>
            <person name="Soltis P.S."/>
            <person name="Soltis D.E."/>
            <person name="Zanis M."/>
        </authorList>
        <dbReference type="AGRICOLA" id="IND22004848"/>
    </citation>
    <scope>NUCLEOTIDE SEQUENCE [GENOMIC DNA]</scope>
</reference>
<feature type="chain" id="PRO_0000143277" description="Maturase K">
    <location>
        <begin position="1"/>
        <end position="505"/>
    </location>
</feature>
<organism>
    <name type="scientific">Barclaya longifolia</name>
    <name type="common">Orchid lily</name>
    <name type="synonym">Hydrostemma longifolium</name>
    <dbReference type="NCBI Taxonomy" id="4412"/>
    <lineage>
        <taxon>Eukaryota</taxon>
        <taxon>Viridiplantae</taxon>
        <taxon>Streptophyta</taxon>
        <taxon>Embryophyta</taxon>
        <taxon>Tracheophyta</taxon>
        <taxon>Spermatophyta</taxon>
        <taxon>Magnoliopsida</taxon>
        <taxon>Nymphaeales</taxon>
        <taxon>Nymphaeaceae</taxon>
        <taxon>Barclaya</taxon>
    </lineage>
</organism>
<name>MATK_BARLO</name>
<dbReference type="EMBL" id="AF092982">
    <property type="protein sequence ID" value="AAD05555.1"/>
    <property type="molecule type" value="Genomic_DNA"/>
</dbReference>
<dbReference type="GO" id="GO:0009507">
    <property type="term" value="C:chloroplast"/>
    <property type="evidence" value="ECO:0007669"/>
    <property type="project" value="UniProtKB-SubCell"/>
</dbReference>
<dbReference type="GO" id="GO:0003723">
    <property type="term" value="F:RNA binding"/>
    <property type="evidence" value="ECO:0007669"/>
    <property type="project" value="UniProtKB-KW"/>
</dbReference>
<dbReference type="GO" id="GO:0006397">
    <property type="term" value="P:mRNA processing"/>
    <property type="evidence" value="ECO:0007669"/>
    <property type="project" value="UniProtKB-KW"/>
</dbReference>
<dbReference type="GO" id="GO:0008380">
    <property type="term" value="P:RNA splicing"/>
    <property type="evidence" value="ECO:0007669"/>
    <property type="project" value="UniProtKB-UniRule"/>
</dbReference>
<dbReference type="GO" id="GO:0008033">
    <property type="term" value="P:tRNA processing"/>
    <property type="evidence" value="ECO:0007669"/>
    <property type="project" value="UniProtKB-KW"/>
</dbReference>
<dbReference type="HAMAP" id="MF_01390">
    <property type="entry name" value="MatK"/>
    <property type="match status" value="1"/>
</dbReference>
<dbReference type="InterPro" id="IPR024937">
    <property type="entry name" value="Domain_X"/>
</dbReference>
<dbReference type="InterPro" id="IPR002866">
    <property type="entry name" value="Maturase_MatK"/>
</dbReference>
<dbReference type="InterPro" id="IPR024942">
    <property type="entry name" value="Maturase_MatK_N"/>
</dbReference>
<dbReference type="PANTHER" id="PTHR34811">
    <property type="entry name" value="MATURASE K"/>
    <property type="match status" value="1"/>
</dbReference>
<dbReference type="PANTHER" id="PTHR34811:SF1">
    <property type="entry name" value="MATURASE K"/>
    <property type="match status" value="1"/>
</dbReference>
<dbReference type="Pfam" id="PF01348">
    <property type="entry name" value="Intron_maturas2"/>
    <property type="match status" value="1"/>
</dbReference>
<dbReference type="Pfam" id="PF01824">
    <property type="entry name" value="MatK_N"/>
    <property type="match status" value="1"/>
</dbReference>
<protein>
    <recommendedName>
        <fullName evidence="1">Maturase K</fullName>
    </recommendedName>
    <alternativeName>
        <fullName evidence="1">Intron maturase</fullName>
    </alternativeName>
</protein>
<gene>
    <name evidence="1" type="primary">matK</name>
</gene>
<proteinExistence type="inferred from homology"/>
<evidence type="ECO:0000255" key="1">
    <source>
        <dbReference type="HAMAP-Rule" id="MF_01390"/>
    </source>
</evidence>
<comment type="function">
    <text evidence="1">Usually encoded in the trnK tRNA gene intron. Probably assists in splicing its own and other chloroplast group II introns.</text>
</comment>
<comment type="subcellular location">
    <subcellularLocation>
        <location>Plastid</location>
        <location>Chloroplast</location>
    </subcellularLocation>
</comment>
<comment type="similarity">
    <text evidence="1">Belongs to the intron maturase 2 family. MatK subfamily.</text>
</comment>
<sequence>MEKLQYELQGYLEIERYRKQRFLYPLLFREYIYALAHDHGLNSSIFYEPTENLGYDNDNKSSSLIVKRLITRLHQQNHLTISVNDSRFVGPNRSFYSQTIPEGFAGIMEIPFSMRLVSSLERLTKYQNFRSIHSIFSFLEDKLSHLYYVSDILIPHPIHLEILLQTLRTRIRDAPSLHLLRCFLHEHNNWNSLITLNKSISIFSKENQRLFLFLYNSHVYECESVLVFLRKQSSHLRSISSLAFLERTHFYGKIKHLVVTLRNDSQRTLPLWFFKEPLMHYVRYQGKSIMASRCTNLLMKKWKYYLVNFWQCHFHLWSQPGGIHINELSNHSFHFLGYLSGVRLTPWVIRSQMLEDSFMIDTAIKRFDTIVPIFPLIGSLVKAKFCNVSGYPISKSVWADSSDSDIIARFGWICTNLSHYHSGSSKKHSLCRIKNILRLSCARTLARKHKSTVRAICKRLGXKLLEEFFTEEHEIVSFIFRRTRLRSERIWYLDIIRINGLVPHS</sequence>